<keyword id="KW-0004">4Fe-4S</keyword>
<keyword id="KW-0933">Apicoplast</keyword>
<keyword id="KW-0067">ATP-binding</keyword>
<keyword id="KW-0378">Hydrolase</keyword>
<keyword id="KW-0408">Iron</keyword>
<keyword id="KW-0411">Iron-sulfur</keyword>
<keyword id="KW-0479">Metal-binding</keyword>
<keyword id="KW-0547">Nucleotide-binding</keyword>
<keyword id="KW-0934">Plastid</keyword>
<keyword id="KW-1185">Reference proteome</keyword>
<comment type="function">
    <text evidence="3 5">Participates in the sulfur mobilization (SUF) pathway for iron-sulfur (Fe-S) cluster biogenesis (PubMed:28695709). As part of a complex consisting of SufB-SufC(2)-SufD, involved in assembly of [4Fe-4S] clusters (PubMed:28695709). Exhibits ATPase activity (PubMed:21722645, PubMed:28695709).</text>
</comment>
<comment type="catalytic activity">
    <reaction evidence="3 5">
        <text>ATP + H2O = ADP + phosphate + H(+)</text>
        <dbReference type="Rhea" id="RHEA:13065"/>
        <dbReference type="ChEBI" id="CHEBI:15377"/>
        <dbReference type="ChEBI" id="CHEBI:15378"/>
        <dbReference type="ChEBI" id="CHEBI:30616"/>
        <dbReference type="ChEBI" id="CHEBI:43474"/>
        <dbReference type="ChEBI" id="CHEBI:456216"/>
    </reaction>
    <physiologicalReaction direction="left-to-right" evidence="10">
        <dbReference type="Rhea" id="RHEA:13066"/>
    </physiologicalReaction>
</comment>
<comment type="pathway">
    <text evidence="10">Cofactor biosynthesis; iron-sulfur cluster biosynthesis.</text>
</comment>
<comment type="subunit">
    <text evidence="3 5">Component of a complex composed of SufB, SufC and SufD in a stoichiometric ratio of 1:2:1 (PubMed:28695709). Interacts with SufB (PubMed:21722645). Interacts with SufD; the interaction enhances the ATPase activity of SufC (PubMed:28695709).</text>
</comment>
<comment type="subcellular location">
    <subcellularLocation>
        <location evidence="3 4">Plastid</location>
        <location evidence="3 4">Apicoplast</location>
    </subcellularLocation>
</comment>
<comment type="induction">
    <text evidence="3">Expression is not affected by oxidative stress.</text>
</comment>
<comment type="PTM">
    <text evidence="3 4">Proteolytically cleaved.</text>
</comment>
<comment type="disruption phenotype">
    <text evidence="6">Parasites require exogenously provided mevalonate for survival (PubMed:37166116). No significant effects on apicoplast morphology (PubMed:37166116).</text>
</comment>
<comment type="similarity">
    <text evidence="10">Belongs to the ABC transporter superfamily. Ycf16 family.</text>
</comment>
<feature type="chain" id="PRO_0000459588" description="Iron-sulfur cluster assembly protein SufC">
    <location>
        <begin position="1"/>
        <end position="347"/>
    </location>
</feature>
<feature type="domain" description="ABC transporter" evidence="1">
    <location>
        <begin position="100"/>
        <end position="346"/>
    </location>
</feature>
<feature type="binding site" evidence="2">
    <location>
        <begin position="134"/>
        <end position="141"/>
    </location>
    <ligand>
        <name>ATP</name>
        <dbReference type="ChEBI" id="CHEBI:30616"/>
    </ligand>
</feature>
<feature type="mutagenesis site" description="Causes the loss of the apicoplast structure. Affects SufC processing. Parasites require continuous supplementation with isopentenyl pyrophosphate for growth." evidence="4">
    <original>K</original>
    <variation>A</variation>
    <location>
        <position position="140"/>
    </location>
</feature>
<protein>
    <recommendedName>
        <fullName evidence="10">Iron-sulfur cluster assembly protein SufC</fullName>
        <shortName evidence="7">PfSufC</shortName>
        <ecNumber evidence="3 5">3.6.1.-</ecNumber>
    </recommendedName>
</protein>
<dbReference type="EC" id="3.6.1.-" evidence="3 5"/>
<dbReference type="EMBL" id="LN999946">
    <property type="protein sequence ID" value="CZT99846.1"/>
    <property type="molecule type" value="Genomic_DNA"/>
</dbReference>
<dbReference type="RefSeq" id="XP_001348306.1">
    <property type="nucleotide sequence ID" value="XM_001348270.1"/>
</dbReference>
<dbReference type="SMR" id="Q8ILW0"/>
<dbReference type="FunCoup" id="Q8ILW0">
    <property type="interactions" value="45"/>
</dbReference>
<dbReference type="STRING" id="36329.Q8ILW0"/>
<dbReference type="PaxDb" id="5833-PF14_0133"/>
<dbReference type="EnsemblProtists" id="CZT99846">
    <property type="protein sequence ID" value="CZT99846"/>
    <property type="gene ID" value="PF3D7_1413500"/>
</dbReference>
<dbReference type="GeneID" id="811714"/>
<dbReference type="KEGG" id="pfa:PF3D7_1413500"/>
<dbReference type="VEuPathDB" id="PlasmoDB:PF3D7_1413500"/>
<dbReference type="HOGENOM" id="CLU_000604_48_1_1"/>
<dbReference type="InParanoid" id="Q8ILW0"/>
<dbReference type="OMA" id="MAMLEPK"/>
<dbReference type="OrthoDB" id="6500128at2759"/>
<dbReference type="PhylomeDB" id="Q8ILW0"/>
<dbReference type="UniPathway" id="UPA00266"/>
<dbReference type="Proteomes" id="UP000001450">
    <property type="component" value="Chromosome 14"/>
</dbReference>
<dbReference type="GO" id="GO:0020011">
    <property type="term" value="C:apicoplast"/>
    <property type="evidence" value="ECO:0000314"/>
    <property type="project" value="CACAO"/>
</dbReference>
<dbReference type="GO" id="GO:0051539">
    <property type="term" value="F:4 iron, 4 sulfur cluster binding"/>
    <property type="evidence" value="ECO:0007669"/>
    <property type="project" value="UniProtKB-KW"/>
</dbReference>
<dbReference type="GO" id="GO:0005524">
    <property type="term" value="F:ATP binding"/>
    <property type="evidence" value="ECO:0007669"/>
    <property type="project" value="UniProtKB-KW"/>
</dbReference>
<dbReference type="GO" id="GO:0016887">
    <property type="term" value="F:ATP hydrolysis activity"/>
    <property type="evidence" value="ECO:0000314"/>
    <property type="project" value="CACAO"/>
</dbReference>
<dbReference type="GO" id="GO:0046872">
    <property type="term" value="F:metal ion binding"/>
    <property type="evidence" value="ECO:0007669"/>
    <property type="project" value="UniProtKB-KW"/>
</dbReference>
<dbReference type="CDD" id="cd03217">
    <property type="entry name" value="ABC_FeS_Assembly"/>
    <property type="match status" value="1"/>
</dbReference>
<dbReference type="FunFam" id="3.40.50.300:FF:000405">
    <property type="entry name" value="Fe-S cluster assembly ATPase SufC"/>
    <property type="match status" value="1"/>
</dbReference>
<dbReference type="Gene3D" id="3.40.50.300">
    <property type="entry name" value="P-loop containing nucleotide triphosphate hydrolases"/>
    <property type="match status" value="1"/>
</dbReference>
<dbReference type="InterPro" id="IPR003439">
    <property type="entry name" value="ABC_transporter-like_ATP-bd"/>
</dbReference>
<dbReference type="InterPro" id="IPR017871">
    <property type="entry name" value="ABC_transporter-like_CS"/>
</dbReference>
<dbReference type="InterPro" id="IPR010230">
    <property type="entry name" value="FeS-cluster_ATPase_SufC"/>
</dbReference>
<dbReference type="InterPro" id="IPR027417">
    <property type="entry name" value="P-loop_NTPase"/>
</dbReference>
<dbReference type="NCBIfam" id="TIGR01978">
    <property type="entry name" value="sufC"/>
    <property type="match status" value="1"/>
</dbReference>
<dbReference type="PANTHER" id="PTHR43204">
    <property type="entry name" value="ABC TRANSPORTER I FAMILY MEMBER 6, CHLOROPLASTIC"/>
    <property type="match status" value="1"/>
</dbReference>
<dbReference type="PANTHER" id="PTHR43204:SF1">
    <property type="entry name" value="ABC TRANSPORTER I FAMILY MEMBER 6, CHLOROPLASTIC"/>
    <property type="match status" value="1"/>
</dbReference>
<dbReference type="Pfam" id="PF00005">
    <property type="entry name" value="ABC_tran"/>
    <property type="match status" value="1"/>
</dbReference>
<dbReference type="SUPFAM" id="SSF52540">
    <property type="entry name" value="P-loop containing nucleoside triphosphate hydrolases"/>
    <property type="match status" value="1"/>
</dbReference>
<dbReference type="PROSITE" id="PS00211">
    <property type="entry name" value="ABC_TRANSPORTER_1"/>
    <property type="match status" value="1"/>
</dbReference>
<dbReference type="PROSITE" id="PS50893">
    <property type="entry name" value="ABC_TRANSPORTER_2"/>
    <property type="match status" value="1"/>
</dbReference>
<sequence length="347" mass="40273">MKRRKWLNITWAVTIYIFFGMINVSSYNEGRKRKNKMYSFVINGYNEYKNKYSFLRKPKNVVHMENNNFDMDRLSLLKNLEEESKIITEGEGWDKTHPLLEIKDLHAIEIEGEKEILKGINLEIYLGEKHTIMGRNGSGKSTLAKVIAGHPYYKITKGIIKYKGLDLINLPVNVRSLCGIFLAFQYPVELPMVKNNEFLRAALNSHRRHRNEEEISVSEFNLMMIEEIKKVGLSSEFLDRPVNYGFSGGEKKRNEILQMLILKPTFCILDETDSGLDVDSFKLTSNVITNFSNDNNSFLIVTHYKKLLELLKPNFIHIMHQGKIIESGDFSLVDKIENKGYSQFLKE</sequence>
<accession>Q8ILW0</accession>
<reference evidence="12" key="1">
    <citation type="journal article" date="2002" name="Nature">
        <title>Genome sequence of the human malaria parasite Plasmodium falciparum.</title>
        <authorList>
            <person name="Gardner M.J."/>
            <person name="Hall N."/>
            <person name="Fung E."/>
            <person name="White O."/>
            <person name="Berriman M."/>
            <person name="Hyman R.W."/>
            <person name="Carlton J.M."/>
            <person name="Pain A."/>
            <person name="Nelson K.E."/>
            <person name="Bowman S."/>
            <person name="Paulsen I.T."/>
            <person name="James K.D."/>
            <person name="Eisen J.A."/>
            <person name="Rutherford K.M."/>
            <person name="Salzberg S.L."/>
            <person name="Craig A."/>
            <person name="Kyes S."/>
            <person name="Chan M.-S."/>
            <person name="Nene V."/>
            <person name="Shallom S.J."/>
            <person name="Suh B."/>
            <person name="Peterson J."/>
            <person name="Angiuoli S."/>
            <person name="Pertea M."/>
            <person name="Allen J."/>
            <person name="Selengut J."/>
            <person name="Haft D."/>
            <person name="Mather M.W."/>
            <person name="Vaidya A.B."/>
            <person name="Martin D.M.A."/>
            <person name="Fairlamb A.H."/>
            <person name="Fraunholz M.J."/>
            <person name="Roos D.S."/>
            <person name="Ralph S.A."/>
            <person name="McFadden G.I."/>
            <person name="Cummings L.M."/>
            <person name="Subramanian G.M."/>
            <person name="Mungall C."/>
            <person name="Venter J.C."/>
            <person name="Carucci D.J."/>
            <person name="Hoffman S.L."/>
            <person name="Newbold C."/>
            <person name="Davis R.W."/>
            <person name="Fraser C.M."/>
            <person name="Barrell B.G."/>
        </authorList>
    </citation>
    <scope>NUCLEOTIDE SEQUENCE [LARGE SCALE GENOMIC DNA]</scope>
    <source>
        <strain evidence="12">3D7</strain>
    </source>
</reference>
<reference evidence="10" key="2">
    <citation type="journal article" date="2011" name="Int. J. Parasitol.">
        <title>Interaction between sulphur mobilisation proteins SufB and SufC: evidence for an iron-sulphur cluster biogenesis pathway in the apicoplast of Plasmodium falciparum.</title>
        <authorList>
            <person name="Kumar B."/>
            <person name="Chaubey S."/>
            <person name="Shah P."/>
            <person name="Tanveer A."/>
            <person name="Charan M."/>
            <person name="Siddiqi M.I."/>
            <person name="Habib S."/>
        </authorList>
    </citation>
    <scope>FUNCTION</scope>
    <scope>CATALYTIC ACTIVITY</scope>
    <scope>INTERACTION WITH SUFB</scope>
    <scope>SUBCELLULAR LOCATION</scope>
    <scope>INDUCTION</scope>
    <scope>PROTEOLYTIC CLEAVAGE</scope>
    <source>
        <strain evidence="7">3D7</strain>
    </source>
</reference>
<reference evidence="10" key="3">
    <citation type="journal article" date="2013" name="PLoS Pathog.">
        <title>The suf iron-sulfur cluster synthesis pathway is required for apicoplast maintenance in malaria parasites.</title>
        <authorList>
            <person name="Gisselberg J.E."/>
            <person name="Dellibovi-Ragheb T.A."/>
            <person name="Matthews K.A."/>
            <person name="Bosch G."/>
            <person name="Prigge S.T."/>
        </authorList>
    </citation>
    <scope>SUBCELLULAR LOCATION</scope>
    <scope>PROTEOLYTIC CLEAVAGE</scope>
    <scope>MUTAGENESIS OF LYS-140</scope>
    <source>
        <strain evidence="8">Dd2</strain>
    </source>
</reference>
<reference evidence="10" key="4">
    <citation type="journal article" date="2017" name="FEBS J.">
        <title>[Fe-S] cluster assembly in the apicoplast and its indispensability in mosquito stages of the malaria parasite.</title>
        <authorList>
            <person name="Charan M."/>
            <person name="Choudhary H.H."/>
            <person name="Singh N."/>
            <person name="Sadik M."/>
            <person name="Siddiqi M.I."/>
            <person name="Mishra S."/>
            <person name="Habib S."/>
        </authorList>
    </citation>
    <scope>FUNCTION</scope>
    <scope>CATALYTIC ACTIVITY</scope>
    <scope>IDENTIFICATION IN COMPLEX WITH SUFB AND SUFD</scope>
    <scope>INTERACTION WITH SUFD</scope>
</reference>
<reference evidence="10" key="5">
    <citation type="journal article" date="2023" name="Elife">
        <title>The Plasmodium falciparum apicoplast cysteine desulfurase provides sulfur for both iron-sulfur cluster assembly and tRNA modification.</title>
        <authorList>
            <person name="Swift R.P."/>
            <person name="Elahi R."/>
            <person name="Rajaram K."/>
            <person name="Liu H.B."/>
            <person name="Prigge S.T."/>
        </authorList>
    </citation>
    <scope>DISRUPTION PHENOTYPE</scope>
    <source>
        <strain evidence="9">NF54</strain>
    </source>
</reference>
<proteinExistence type="evidence at protein level"/>
<organism evidence="12">
    <name type="scientific">Plasmodium falciparum (isolate 3D7)</name>
    <dbReference type="NCBI Taxonomy" id="36329"/>
    <lineage>
        <taxon>Eukaryota</taxon>
        <taxon>Sar</taxon>
        <taxon>Alveolata</taxon>
        <taxon>Apicomplexa</taxon>
        <taxon>Aconoidasida</taxon>
        <taxon>Haemosporida</taxon>
        <taxon>Plasmodiidae</taxon>
        <taxon>Plasmodium</taxon>
        <taxon>Plasmodium (Laverania)</taxon>
    </lineage>
</organism>
<gene>
    <name evidence="10" type="primary">SufC</name>
    <name evidence="11" type="ORF">PF3D7_1413500</name>
</gene>
<name>SUFC_PLAF7</name>
<evidence type="ECO:0000255" key="1">
    <source>
        <dbReference type="PROSITE-ProRule" id="PRU00434"/>
    </source>
</evidence>
<evidence type="ECO:0000255" key="2">
    <source>
        <dbReference type="PROSITE-ProRule" id="PRU00499"/>
    </source>
</evidence>
<evidence type="ECO:0000269" key="3">
    <source>
    </source>
</evidence>
<evidence type="ECO:0000269" key="4">
    <source>
    </source>
</evidence>
<evidence type="ECO:0000269" key="5">
    <source>
    </source>
</evidence>
<evidence type="ECO:0000269" key="6">
    <source>
    </source>
</evidence>
<evidence type="ECO:0000303" key="7">
    <source>
    </source>
</evidence>
<evidence type="ECO:0000303" key="8">
    <source>
    </source>
</evidence>
<evidence type="ECO:0000303" key="9">
    <source>
    </source>
</evidence>
<evidence type="ECO:0000305" key="10"/>
<evidence type="ECO:0000312" key="11">
    <source>
        <dbReference type="EMBL" id="CZT99846.1"/>
    </source>
</evidence>
<evidence type="ECO:0000312" key="12">
    <source>
        <dbReference type="Proteomes" id="UP000001450"/>
    </source>
</evidence>